<feature type="transit peptide" description="Chloroplast" evidence="1">
    <location>
        <begin position="1"/>
        <end position="65"/>
    </location>
</feature>
<feature type="chain" id="PRO_0000286540" description="Phytyl ester synthase 2, chloroplastic">
    <location>
        <begin position="66"/>
        <end position="701"/>
    </location>
</feature>
<feature type="region of interest" description="Disordered" evidence="2">
    <location>
        <begin position="37"/>
        <end position="64"/>
    </location>
</feature>
<comment type="function">
    <text evidence="5">Acyltransferase involved in fatty acid phytyl ester synthesis in chloroplasts, a process required for the maintenance of the photosynthetic membrane integrity during abiotic stress and senescence (PubMed:22623494). Exhibits phytyl ester synthesis and diacylglycerol acyltransferase activities with broad substrate specificities, and can employ acyl-CoAs, acyl carrier proteins, and galactolipids as acyl donors (PubMed:22623494).</text>
</comment>
<comment type="catalytic activity">
    <reaction evidence="5">
        <text>a 1,2-diacyl-3-O-(beta-D-galactosyl)-sn-glycerol + a 1,2-diacylglycerol = an acyl-3-O-(beta-D-galactosyl)-sn-glycerol + a triacylglycerol</text>
        <dbReference type="Rhea" id="RHEA:68116"/>
        <dbReference type="ChEBI" id="CHEBI:17615"/>
        <dbReference type="ChEBI" id="CHEBI:17855"/>
        <dbReference type="ChEBI" id="CHEBI:49172"/>
        <dbReference type="ChEBI" id="CHEBI:141434"/>
    </reaction>
    <physiologicalReaction direction="left-to-right" evidence="5">
        <dbReference type="Rhea" id="RHEA:68117"/>
    </physiologicalReaction>
</comment>
<comment type="catalytic activity">
    <reaction evidence="5">
        <text>a 1,2-diacylglycerol + a fatty acyl-CoA = a triacylglycerol + CoA</text>
        <dbReference type="Rhea" id="RHEA:68120"/>
        <dbReference type="ChEBI" id="CHEBI:17855"/>
        <dbReference type="ChEBI" id="CHEBI:49172"/>
        <dbReference type="ChEBI" id="CHEBI:57287"/>
        <dbReference type="ChEBI" id="CHEBI:77636"/>
    </reaction>
    <physiologicalReaction direction="left-to-right" evidence="5">
        <dbReference type="Rhea" id="RHEA:68121"/>
    </physiologicalReaction>
</comment>
<comment type="catalytic activity">
    <reaction evidence="5">
        <text>a fatty acyl-[ACP] + a 1,2-diacylglycerol = a triacylglycerol + holo-[ACP]</text>
        <dbReference type="Rhea" id="RHEA:68124"/>
        <dbReference type="Rhea" id="RHEA-COMP:9685"/>
        <dbReference type="Rhea" id="RHEA-COMP:14125"/>
        <dbReference type="ChEBI" id="CHEBI:17855"/>
        <dbReference type="ChEBI" id="CHEBI:49172"/>
        <dbReference type="ChEBI" id="CHEBI:64479"/>
        <dbReference type="ChEBI" id="CHEBI:138651"/>
    </reaction>
    <physiologicalReaction direction="left-to-right" evidence="5">
        <dbReference type="Rhea" id="RHEA:68125"/>
    </physiologicalReaction>
</comment>
<comment type="catalytic activity">
    <reaction evidence="5">
        <text>phytol + a fatty acyl-CoA = a fatty acid phytyl ester + CoA</text>
        <dbReference type="Rhea" id="RHEA:68128"/>
        <dbReference type="ChEBI" id="CHEBI:17327"/>
        <dbReference type="ChEBI" id="CHEBI:57287"/>
        <dbReference type="ChEBI" id="CHEBI:77636"/>
        <dbReference type="ChEBI" id="CHEBI:177021"/>
    </reaction>
    <physiologicalReaction direction="left-to-right" evidence="5">
        <dbReference type="Rhea" id="RHEA:68129"/>
    </physiologicalReaction>
</comment>
<comment type="catalytic activity">
    <reaction evidence="5">
        <text>phytol + tetradecanoyl-CoA = tetradecanoate phytyl ester + CoA</text>
        <dbReference type="Rhea" id="RHEA:68132"/>
        <dbReference type="ChEBI" id="CHEBI:17327"/>
        <dbReference type="ChEBI" id="CHEBI:57287"/>
        <dbReference type="ChEBI" id="CHEBI:57385"/>
        <dbReference type="ChEBI" id="CHEBI:177026"/>
    </reaction>
    <physiologicalReaction direction="left-to-right" evidence="5">
        <dbReference type="Rhea" id="RHEA:68133"/>
    </physiologicalReaction>
</comment>
<comment type="catalytic activity">
    <reaction evidence="5">
        <text>a 1,3-diacylglycerol + a fatty acyl-CoA = a triacylglycerol + CoA</text>
        <dbReference type="Rhea" id="RHEA:68152"/>
        <dbReference type="ChEBI" id="CHEBI:17855"/>
        <dbReference type="ChEBI" id="CHEBI:47777"/>
        <dbReference type="ChEBI" id="CHEBI:57287"/>
        <dbReference type="ChEBI" id="CHEBI:77636"/>
    </reaction>
    <physiologicalReaction direction="left-to-right" evidence="5">
        <dbReference type="Rhea" id="RHEA:68153"/>
    </physiologicalReaction>
</comment>
<comment type="catalytic activity">
    <reaction evidence="5">
        <text>1,2-dihexanoylglycerol + tetradecanoyl-CoA = 1,2-dihexanoyl-3-tetradecanoylglycerol + CoA</text>
        <dbReference type="Rhea" id="RHEA:68196"/>
        <dbReference type="ChEBI" id="CHEBI:57287"/>
        <dbReference type="ChEBI" id="CHEBI:57385"/>
        <dbReference type="ChEBI" id="CHEBI:177077"/>
        <dbReference type="ChEBI" id="CHEBI:177078"/>
    </reaction>
    <physiologicalReaction direction="left-to-right" evidence="5">
        <dbReference type="Rhea" id="RHEA:68197"/>
    </physiologicalReaction>
</comment>
<comment type="catalytic activity">
    <reaction evidence="5">
        <text>1,2-dihexanoylglycerol + hexadecanoyl-CoA = 1,2-dihexanoyl-3-hexadecanoylglycerol + CoA</text>
        <dbReference type="Rhea" id="RHEA:68200"/>
        <dbReference type="ChEBI" id="CHEBI:57287"/>
        <dbReference type="ChEBI" id="CHEBI:57379"/>
        <dbReference type="ChEBI" id="CHEBI:177077"/>
        <dbReference type="ChEBI" id="CHEBI:177079"/>
    </reaction>
    <physiologicalReaction direction="left-to-right" evidence="5">
        <dbReference type="Rhea" id="RHEA:68201"/>
    </physiologicalReaction>
</comment>
<comment type="catalytic activity">
    <reaction evidence="5">
        <text>1,2-dihexanoylglycerol + octadecanoyl-CoA = 1,2-dihexanoyl-3-octadecanoylglycerol + CoA</text>
        <dbReference type="Rhea" id="RHEA:68204"/>
        <dbReference type="ChEBI" id="CHEBI:57287"/>
        <dbReference type="ChEBI" id="CHEBI:57394"/>
        <dbReference type="ChEBI" id="CHEBI:177077"/>
        <dbReference type="ChEBI" id="CHEBI:177080"/>
    </reaction>
    <physiologicalReaction direction="left-to-right" evidence="5">
        <dbReference type="Rhea" id="RHEA:68205"/>
    </physiologicalReaction>
</comment>
<comment type="catalytic activity">
    <reaction evidence="5">
        <text>(7Z,10Z,13Z)-hexadecatrienoyl-CoA + 1,2-dihexanoylglycerol = 1,2-dihexanoyl-3-(7Z,10Z,13Z-hexadecatrienoyl)-glycerol + CoA</text>
        <dbReference type="Rhea" id="RHEA:68208"/>
        <dbReference type="ChEBI" id="CHEBI:57287"/>
        <dbReference type="ChEBI" id="CHEBI:177077"/>
        <dbReference type="ChEBI" id="CHEBI:177083"/>
        <dbReference type="ChEBI" id="CHEBI:177091"/>
    </reaction>
    <physiologicalReaction direction="left-to-right" evidence="5">
        <dbReference type="Rhea" id="RHEA:68209"/>
    </physiologicalReaction>
</comment>
<comment type="catalytic activity">
    <reaction evidence="5">
        <text>1,2-dihexanoylglycerol + (9Z)-octadecenoyl-CoA = 1,2-dihexanoyl-3-(9Z-octadecenoyl)-glycerol + CoA</text>
        <dbReference type="Rhea" id="RHEA:68212"/>
        <dbReference type="ChEBI" id="CHEBI:57287"/>
        <dbReference type="ChEBI" id="CHEBI:57387"/>
        <dbReference type="ChEBI" id="CHEBI:177077"/>
        <dbReference type="ChEBI" id="CHEBI:177087"/>
    </reaction>
    <physiologicalReaction direction="left-to-right" evidence="5">
        <dbReference type="Rhea" id="RHEA:68213"/>
    </physiologicalReaction>
</comment>
<comment type="catalytic activity">
    <reaction evidence="5">
        <text>1,2-dihexanoylglycerol + (9Z,12Z,15Z)-octadecatrienoyl-CoA = 1,2-dihexanoyl-3-(9Z,12Z,15Z-octadecatrienoyl)-glycerol + CoA</text>
        <dbReference type="Rhea" id="RHEA:68216"/>
        <dbReference type="ChEBI" id="CHEBI:57287"/>
        <dbReference type="ChEBI" id="CHEBI:74034"/>
        <dbReference type="ChEBI" id="CHEBI:177077"/>
        <dbReference type="ChEBI" id="CHEBI:177088"/>
    </reaction>
    <physiologicalReaction direction="left-to-right" evidence="5">
        <dbReference type="Rhea" id="RHEA:68217"/>
    </physiologicalReaction>
</comment>
<comment type="catalytic activity">
    <reaction evidence="5">
        <text>phytol + decanoyl-CoA = decanoate phytyl ester + CoA</text>
        <dbReference type="Rhea" id="RHEA:68192"/>
        <dbReference type="ChEBI" id="CHEBI:17327"/>
        <dbReference type="ChEBI" id="CHEBI:57287"/>
        <dbReference type="ChEBI" id="CHEBI:61430"/>
        <dbReference type="ChEBI" id="CHEBI:177028"/>
    </reaction>
    <physiologicalReaction direction="left-to-right" evidence="5">
        <dbReference type="Rhea" id="RHEA:68193"/>
    </physiologicalReaction>
</comment>
<comment type="catalytic activity">
    <reaction evidence="5">
        <text>(7Z,10Z,13Z)-hexadecatrienoyl-CoA + phytol = (7Z,10Z,13Z)-hexadecatrienoate phytyl ester + CoA</text>
        <dbReference type="Rhea" id="RHEA:68220"/>
        <dbReference type="ChEBI" id="CHEBI:17327"/>
        <dbReference type="ChEBI" id="CHEBI:57287"/>
        <dbReference type="ChEBI" id="CHEBI:177029"/>
        <dbReference type="ChEBI" id="CHEBI:177091"/>
    </reaction>
    <physiologicalReaction direction="left-to-right" evidence="5">
        <dbReference type="Rhea" id="RHEA:68221"/>
    </physiologicalReaction>
</comment>
<comment type="catalytic activity">
    <reaction evidence="5">
        <text>phytol + dodecanoyl-CoA = dodecanoate phytyl ester + CoA</text>
        <dbReference type="Rhea" id="RHEA:68188"/>
        <dbReference type="ChEBI" id="CHEBI:17327"/>
        <dbReference type="ChEBI" id="CHEBI:57287"/>
        <dbReference type="ChEBI" id="CHEBI:57375"/>
        <dbReference type="ChEBI" id="CHEBI:177027"/>
    </reaction>
    <physiologicalReaction direction="left-to-right" evidence="5">
        <dbReference type="Rhea" id="RHEA:68189"/>
    </physiologicalReaction>
</comment>
<comment type="subcellular location">
    <subcellularLocation>
        <location evidence="3 4 5">Plastid</location>
        <location evidence="3 4 5">Chloroplast</location>
        <location evidence="3 4 5">Plastoglobule</location>
    </subcellularLocation>
</comment>
<comment type="developmental stage">
    <text evidence="5">Highly expressed during senescence.</text>
</comment>
<comment type="induction">
    <text evidence="5">Accumulates upon nitrogen deprivation.</text>
</comment>
<comment type="disruption phenotype">
    <text evidence="5">Plants lacking both PES1 and PES2 grow normally but show reduced phytyl ester and triacylglycerol accumulation.</text>
</comment>
<comment type="similarity">
    <text evidence="7">Belongs to the diacylglycerol acyltransferase family.</text>
</comment>
<evidence type="ECO:0000255" key="1"/>
<evidence type="ECO:0000256" key="2">
    <source>
        <dbReference type="SAM" id="MobiDB-lite"/>
    </source>
</evidence>
<evidence type="ECO:0000269" key="3">
    <source>
    </source>
</evidence>
<evidence type="ECO:0000269" key="4">
    <source>
    </source>
</evidence>
<evidence type="ECO:0000269" key="5">
    <source>
    </source>
</evidence>
<evidence type="ECO:0000303" key="6">
    <source>
    </source>
</evidence>
<evidence type="ECO:0000305" key="7"/>
<evidence type="ECO:0000312" key="8">
    <source>
        <dbReference type="Araport" id="AT3G26840"/>
    </source>
</evidence>
<evidence type="ECO:0000312" key="9">
    <source>
        <dbReference type="EMBL" id="BAB01231.1"/>
    </source>
</evidence>
<organism>
    <name type="scientific">Arabidopsis thaliana</name>
    <name type="common">Mouse-ear cress</name>
    <dbReference type="NCBI Taxonomy" id="3702"/>
    <lineage>
        <taxon>Eukaryota</taxon>
        <taxon>Viridiplantae</taxon>
        <taxon>Streptophyta</taxon>
        <taxon>Embryophyta</taxon>
        <taxon>Tracheophyta</taxon>
        <taxon>Spermatophyta</taxon>
        <taxon>Magnoliopsida</taxon>
        <taxon>eudicotyledons</taxon>
        <taxon>Gunneridae</taxon>
        <taxon>Pentapetalae</taxon>
        <taxon>rosids</taxon>
        <taxon>malvids</taxon>
        <taxon>Brassicales</taxon>
        <taxon>Brassicaceae</taxon>
        <taxon>Camelineae</taxon>
        <taxon>Arabidopsis</taxon>
    </lineage>
</organism>
<proteinExistence type="evidence at protein level"/>
<name>PES2_ARATH</name>
<reference key="1">
    <citation type="journal article" date="2000" name="DNA Res.">
        <title>Structural analysis of Arabidopsis thaliana chromosome 3. I. Sequence features of the regions of 4,504,864 bp covered by sixty P1 and TAC clones.</title>
        <authorList>
            <person name="Sato S."/>
            <person name="Nakamura Y."/>
            <person name="Kaneko T."/>
            <person name="Katoh T."/>
            <person name="Asamizu E."/>
            <person name="Tabata S."/>
        </authorList>
    </citation>
    <scope>NUCLEOTIDE SEQUENCE [LARGE SCALE GENOMIC DNA]</scope>
    <source>
        <strain>cv. Columbia</strain>
    </source>
</reference>
<reference key="2">
    <citation type="journal article" date="2017" name="Plant J.">
        <title>Araport11: a complete reannotation of the Arabidopsis thaliana reference genome.</title>
        <authorList>
            <person name="Cheng C.Y."/>
            <person name="Krishnakumar V."/>
            <person name="Chan A.P."/>
            <person name="Thibaud-Nissen F."/>
            <person name="Schobel S."/>
            <person name="Town C.D."/>
        </authorList>
    </citation>
    <scope>GENOME REANNOTATION</scope>
    <source>
        <strain>cv. Columbia</strain>
    </source>
</reference>
<reference key="3">
    <citation type="journal article" date="2003" name="Science">
        <title>Empirical analysis of transcriptional activity in the Arabidopsis genome.</title>
        <authorList>
            <person name="Yamada K."/>
            <person name="Lim J."/>
            <person name="Dale J.M."/>
            <person name="Chen H."/>
            <person name="Shinn P."/>
            <person name="Palm C.J."/>
            <person name="Southwick A.M."/>
            <person name="Wu H.C."/>
            <person name="Kim C.J."/>
            <person name="Nguyen M."/>
            <person name="Pham P.K."/>
            <person name="Cheuk R.F."/>
            <person name="Karlin-Newmann G."/>
            <person name="Liu S.X."/>
            <person name="Lam B."/>
            <person name="Sakano H."/>
            <person name="Wu T."/>
            <person name="Yu G."/>
            <person name="Miranda M."/>
            <person name="Quach H.L."/>
            <person name="Tripp M."/>
            <person name="Chang C.H."/>
            <person name="Lee J.M."/>
            <person name="Toriumi M.J."/>
            <person name="Chan M.M."/>
            <person name="Tang C.C."/>
            <person name="Onodera C.S."/>
            <person name="Deng J.M."/>
            <person name="Akiyama K."/>
            <person name="Ansari Y."/>
            <person name="Arakawa T."/>
            <person name="Banh J."/>
            <person name="Banno F."/>
            <person name="Bowser L."/>
            <person name="Brooks S.Y."/>
            <person name="Carninci P."/>
            <person name="Chao Q."/>
            <person name="Choy N."/>
            <person name="Enju A."/>
            <person name="Goldsmith A.D."/>
            <person name="Gurjal M."/>
            <person name="Hansen N.F."/>
            <person name="Hayashizaki Y."/>
            <person name="Johnson-Hopson C."/>
            <person name="Hsuan V.W."/>
            <person name="Iida K."/>
            <person name="Karnes M."/>
            <person name="Khan S."/>
            <person name="Koesema E."/>
            <person name="Ishida J."/>
            <person name="Jiang P.X."/>
            <person name="Jones T."/>
            <person name="Kawai J."/>
            <person name="Kamiya A."/>
            <person name="Meyers C."/>
            <person name="Nakajima M."/>
            <person name="Narusaka M."/>
            <person name="Seki M."/>
            <person name="Sakurai T."/>
            <person name="Satou M."/>
            <person name="Tamse R."/>
            <person name="Vaysberg M."/>
            <person name="Wallender E.K."/>
            <person name="Wong C."/>
            <person name="Yamamura Y."/>
            <person name="Yuan S."/>
            <person name="Shinozaki K."/>
            <person name="Davis R.W."/>
            <person name="Theologis A."/>
            <person name="Ecker J.R."/>
        </authorList>
    </citation>
    <scope>NUCLEOTIDE SEQUENCE [LARGE SCALE MRNA]</scope>
    <source>
        <strain>cv. Columbia</strain>
    </source>
</reference>
<reference key="4">
    <citation type="journal article" date="2006" name="Plant Physiol.">
        <title>Protein profiling of plastoglobules in chloroplasts and chromoplasts. A surprising site for differential accumulation of metabolic enzymes.</title>
        <authorList>
            <person name="Ytterberg A.J."/>
            <person name="Peltier J.-B."/>
            <person name="van Wijk K.J."/>
        </authorList>
    </citation>
    <scope>IDENTIFICATION BY MASS SPECTROMETRY</scope>
    <scope>SUBCELLULAR LOCATION [LARGE SCALE ANALYSIS]</scope>
    <source>
        <strain>cv. Columbia</strain>
    </source>
</reference>
<reference key="5">
    <citation type="journal article" date="2012" name="Plant Cell">
        <title>Fatty acid phytyl ester synthesis in chloroplasts of Arabidopsis.</title>
        <authorList>
            <person name="Lippold F."/>
            <person name="vom Dorp K."/>
            <person name="Abraham M."/>
            <person name="Hoelzl G."/>
            <person name="Wewer V."/>
            <person name="Yilmaz J.L."/>
            <person name="Lager I."/>
            <person name="Montandon C."/>
            <person name="Besagni C."/>
            <person name="Kessler F."/>
            <person name="Stymne S."/>
            <person name="Doermann P."/>
        </authorList>
    </citation>
    <scope>FUNCTION</scope>
    <scope>DISRUPTION PHENOTYPE</scope>
    <scope>DEVELOPMENTAL STAGE</scope>
    <scope>INDUCTION BY NITROGEN DEPRIVATION</scope>
    <scope>SUBCELLULAR LOCATION</scope>
    <scope>CATALYTIC ACTIVITY</scope>
</reference>
<reference key="6">
    <citation type="journal article" date="2012" name="Plant Physiol.">
        <title>The functional network of the Arabidopsis plastoglobule proteome based on quantitative proteomics and genome-wide coexpression analysis.</title>
        <authorList>
            <person name="Lundquist P.K."/>
            <person name="Poliakov A."/>
            <person name="Bhuiyan N.H."/>
            <person name="Zybailov B."/>
            <person name="Sun Q."/>
            <person name="van Wijk K.J."/>
        </authorList>
    </citation>
    <scope>IDENTIFICATION BY MASS SPECTROMETRY</scope>
    <scope>SUBCELLULAR LOCATION [LARGE SCALE ANALYSIS]</scope>
    <source>
        <strain>cv. Columbia</strain>
    </source>
</reference>
<accession>Q9LW26</accession>
<protein>
    <recommendedName>
        <fullName evidence="6">Phytyl ester synthase 2, chloroplastic</fullName>
        <ecNumber evidence="5">2.3.1.-</ecNumber>
    </recommendedName>
</protein>
<dbReference type="EC" id="2.3.1.-" evidence="5"/>
<dbReference type="EMBL" id="AB016889">
    <property type="protein sequence ID" value="BAB01231.1"/>
    <property type="molecule type" value="Genomic_DNA"/>
</dbReference>
<dbReference type="EMBL" id="CP002686">
    <property type="protein sequence ID" value="AEE77221.1"/>
    <property type="molecule type" value="Genomic_DNA"/>
</dbReference>
<dbReference type="EMBL" id="AY056370">
    <property type="protein sequence ID" value="AAL07256.1"/>
    <property type="molecule type" value="mRNA"/>
</dbReference>
<dbReference type="EMBL" id="AF360145">
    <property type="protein sequence ID" value="AAK25855.1"/>
    <property type="molecule type" value="mRNA"/>
</dbReference>
<dbReference type="RefSeq" id="NP_566801.1">
    <property type="nucleotide sequence ID" value="NM_113596.2"/>
</dbReference>
<dbReference type="BioGRID" id="7629">
    <property type="interactions" value="1"/>
</dbReference>
<dbReference type="FunCoup" id="Q9LW26">
    <property type="interactions" value="14"/>
</dbReference>
<dbReference type="STRING" id="3702.Q9LW26"/>
<dbReference type="ESTHER" id="arath-Y3684">
    <property type="family name" value="AlphaBeta_hydrolase"/>
</dbReference>
<dbReference type="GlyGen" id="Q9LW26">
    <property type="glycosylation" value="1 site"/>
</dbReference>
<dbReference type="iPTMnet" id="Q9LW26"/>
<dbReference type="PaxDb" id="3702-AT3G26840.1"/>
<dbReference type="ProteomicsDB" id="234638"/>
<dbReference type="EnsemblPlants" id="AT3G26840.1">
    <property type="protein sequence ID" value="AT3G26840.1"/>
    <property type="gene ID" value="AT3G26840"/>
</dbReference>
<dbReference type="GeneID" id="822299"/>
<dbReference type="Gramene" id="AT3G26840.1">
    <property type="protein sequence ID" value="AT3G26840.1"/>
    <property type="gene ID" value="AT3G26840"/>
</dbReference>
<dbReference type="KEGG" id="ath:AT3G26840"/>
<dbReference type="Araport" id="AT3G26840"/>
<dbReference type="TAIR" id="AT3G26840">
    <property type="gene designation" value="PES2"/>
</dbReference>
<dbReference type="eggNOG" id="ENOG502QQUD">
    <property type="taxonomic scope" value="Eukaryota"/>
</dbReference>
<dbReference type="HOGENOM" id="CLU_015395_2_1_1"/>
<dbReference type="InParanoid" id="Q9LW26"/>
<dbReference type="OMA" id="NQQVHMP"/>
<dbReference type="PhylomeDB" id="Q9LW26"/>
<dbReference type="PRO" id="PR:Q9LW26"/>
<dbReference type="Proteomes" id="UP000006548">
    <property type="component" value="Chromosome 3"/>
</dbReference>
<dbReference type="ExpressionAtlas" id="Q9LW26">
    <property type="expression patterns" value="baseline and differential"/>
</dbReference>
<dbReference type="GO" id="GO:0009507">
    <property type="term" value="C:chloroplast"/>
    <property type="evidence" value="ECO:0000314"/>
    <property type="project" value="TAIR"/>
</dbReference>
<dbReference type="GO" id="GO:0010287">
    <property type="term" value="C:plastoglobule"/>
    <property type="evidence" value="ECO:0000314"/>
    <property type="project" value="UniProtKB"/>
</dbReference>
<dbReference type="GO" id="GO:0004144">
    <property type="term" value="F:diacylglycerol O-acyltransferase activity"/>
    <property type="evidence" value="ECO:0000314"/>
    <property type="project" value="TAIR"/>
</dbReference>
<dbReference type="GO" id="GO:0006995">
    <property type="term" value="P:cellular response to nitrogen starvation"/>
    <property type="evidence" value="ECO:0000270"/>
    <property type="project" value="UniProtKB"/>
</dbReference>
<dbReference type="GO" id="GO:0033306">
    <property type="term" value="P:phytol metabolic process"/>
    <property type="evidence" value="ECO:0000314"/>
    <property type="project" value="TAIR"/>
</dbReference>
<dbReference type="GO" id="GO:0090693">
    <property type="term" value="P:plant organ senescence"/>
    <property type="evidence" value="ECO:0000270"/>
    <property type="project" value="UniProtKB"/>
</dbReference>
<dbReference type="GO" id="GO:1904963">
    <property type="term" value="P:regulation of phytol biosynthetic process"/>
    <property type="evidence" value="ECO:0000315"/>
    <property type="project" value="UniProtKB"/>
</dbReference>
<dbReference type="GO" id="GO:0010866">
    <property type="term" value="P:regulation of triglyceride biosynthetic process"/>
    <property type="evidence" value="ECO:0000315"/>
    <property type="project" value="UniProtKB"/>
</dbReference>
<dbReference type="GO" id="GO:0019432">
    <property type="term" value="P:triglyceride biosynthetic process"/>
    <property type="evidence" value="ECO:0000316"/>
    <property type="project" value="TAIR"/>
</dbReference>
<dbReference type="CDD" id="cd07987">
    <property type="entry name" value="LPLAT_MGAT-like"/>
    <property type="match status" value="1"/>
</dbReference>
<dbReference type="Gene3D" id="3.40.50.1820">
    <property type="entry name" value="alpha/beta hydrolase"/>
    <property type="match status" value="1"/>
</dbReference>
<dbReference type="InterPro" id="IPR029058">
    <property type="entry name" value="AB_hydrolase_fold"/>
</dbReference>
<dbReference type="InterPro" id="IPR007130">
    <property type="entry name" value="DAGAT"/>
</dbReference>
<dbReference type="PANTHER" id="PTHR22753:SF43">
    <property type="entry name" value="ESTERASE_LIPASE_THIOESTERASE FAMILY PROTEIN-RELATED"/>
    <property type="match status" value="1"/>
</dbReference>
<dbReference type="PANTHER" id="PTHR22753">
    <property type="entry name" value="TRANSMEMBRANE PROTEIN 68"/>
    <property type="match status" value="1"/>
</dbReference>
<dbReference type="Pfam" id="PF03982">
    <property type="entry name" value="DAGAT"/>
    <property type="match status" value="1"/>
</dbReference>
<dbReference type="SUPFAM" id="SSF53474">
    <property type="entry name" value="alpha/beta-Hydrolases"/>
    <property type="match status" value="1"/>
</dbReference>
<sequence length="701" mass="78609">MAVTVLPSVSGLSAVASSSNLRRLTSASNHRLTAIKSVTSTSSPPTPSSGVQRRRKNNDENRATVAKVVENPYSKVEAARPDLQKRLSDFLEEAREFVGDGGGPPRWFSPLECGAQATNSPLLLYLPGIDGTGLGLIRHHKKLGEIFDIWCLHIPVSDRTPVKDLVKLIEETVKSENFRLPNRPIYLVGESIGACLALDVAARNPNIDLSLILVNPATHVNNFMVQPLSGMLNVLPDGLPTLLEDIFDFGFKQGDPLTGMLDALSNEFSVQRMGGVGGGMLRDVLAVSANLPTLSRMFPKDTLLWKLEMLKYAIASVNSHIYSVRAETLILLSGRDHWLLKEEDIDRYSRTLPKCIVRKLDDNGQFPLLEDGVDLATIIKCTCFYRRGKSHDHITDYIMPTTFELKQQVDDHRLLMDGTSPVMLSTLEDGTVVRSLEGLPSEGPVLYVGYHMILGFELAPMVIQLMTERNIHLRGLAHPMLFKNLQDSLVDTKMFDKYKIMGGVPVSHFNIYKLLREKAHVLLYPGGVREALHRKGEEYKLFWPERSEFVRVASKFGAKIVPFGVVGEDDICEIVLDSNDQRNIPILKDLMEKATKDAGNIREGDESELGNQECYFPGLVPKIPGRFYYYFGKPIETAGKEKELKDKEKAQELYLQVKSEVEQCIDYLKVKRESDPYRHLLPRMLYQASHGWSSEIPTFDL</sequence>
<keyword id="KW-0012">Acyltransferase</keyword>
<keyword id="KW-0150">Chloroplast</keyword>
<keyword id="KW-0934">Plastid</keyword>
<keyword id="KW-1185">Reference proteome</keyword>
<keyword id="KW-0346">Stress response</keyword>
<keyword id="KW-0808">Transferase</keyword>
<keyword id="KW-0809">Transit peptide</keyword>
<gene>
    <name evidence="6" type="primary">PES2</name>
    <name evidence="8" type="ordered locus">At3g26840</name>
    <name evidence="9" type="ORF">MDJ14.16</name>
</gene>